<keyword id="KW-0025">Alternative splicing</keyword>
<keyword id="KW-1003">Cell membrane</keyword>
<keyword id="KW-0175">Coiled coil</keyword>
<keyword id="KW-0449">Lipoprotein</keyword>
<keyword id="KW-0472">Membrane</keyword>
<keyword id="KW-0564">Palmitate</keyword>
<keyword id="KW-0597">Phosphoprotein</keyword>
<keyword id="KW-1185">Reference proteome</keyword>
<keyword id="KW-0677">Repeat</keyword>
<keyword id="KW-0770">Synapse</keyword>
<keyword id="KW-0771">Synaptosome</keyword>
<gene>
    <name type="primary">SNAP25</name>
    <name type="synonym">SNAP</name>
</gene>
<name>SNP25_CHICK</name>
<sequence>MAEDADMRNELEEMQRRADQLADESLESTRRMLQLVEESKDAGIRTLVMLDEQGEQLERIEEGMDQINKDMKEAEKNLTDLGKFCGLCVCPCNKLKSSDAYKKAWGNNQDGVVASQPARVVDEREQMAISGGFIRRVTNDARENEMDENLEQVSGIIGNLRHMALDMGNEIDTQNRQIDRIMEKADSNKTRIDEANQRATKMLGSG</sequence>
<evidence type="ECO:0000250" key="1"/>
<evidence type="ECO:0000250" key="2">
    <source>
        <dbReference type="UniProtKB" id="P60881"/>
    </source>
</evidence>
<evidence type="ECO:0000255" key="3">
    <source>
        <dbReference type="PROSITE-ProRule" id="PRU00202"/>
    </source>
</evidence>
<evidence type="ECO:0000256" key="4">
    <source>
        <dbReference type="SAM" id="MobiDB-lite"/>
    </source>
</evidence>
<evidence type="ECO:0000305" key="5"/>
<accession>P60878</accession>
<accession>P13795</accession>
<accession>P36974</accession>
<accession>P70557</accession>
<accession>P70558</accession>
<accession>Q8IXK3</accession>
<accession>Q96FM2</accession>
<accession>Q9BR45</accession>
<organism>
    <name type="scientific">Gallus gallus</name>
    <name type="common">Chicken</name>
    <dbReference type="NCBI Taxonomy" id="9031"/>
    <lineage>
        <taxon>Eukaryota</taxon>
        <taxon>Metazoa</taxon>
        <taxon>Chordata</taxon>
        <taxon>Craniata</taxon>
        <taxon>Vertebrata</taxon>
        <taxon>Euteleostomi</taxon>
        <taxon>Archelosauria</taxon>
        <taxon>Archosauria</taxon>
        <taxon>Dinosauria</taxon>
        <taxon>Saurischia</taxon>
        <taxon>Theropoda</taxon>
        <taxon>Coelurosauria</taxon>
        <taxon>Aves</taxon>
        <taxon>Neognathae</taxon>
        <taxon>Galloanserae</taxon>
        <taxon>Galliformes</taxon>
        <taxon>Phasianidae</taxon>
        <taxon>Phasianinae</taxon>
        <taxon>Gallus</taxon>
    </lineage>
</organism>
<protein>
    <recommendedName>
        <fullName>Synaptosomal-associated protein 25</fullName>
        <shortName>SNAP-25</shortName>
    </recommendedName>
    <alternativeName>
        <fullName>Super protein</fullName>
        <shortName>SUP</shortName>
    </alternativeName>
    <alternativeName>
        <fullName>Synaptosomal-associated 25 kDa protein</fullName>
    </alternativeName>
</protein>
<reference key="1">
    <citation type="journal article" date="1991" name="Proc. Natl. Acad. Sci. U.S.A.">
        <title>Expression of a conserved cell-type-specific protein in nerve terminals coincides with synaptogenesis.</title>
        <authorList>
            <person name="Catsicas S."/>
            <person name="Larhammar D."/>
            <person name="Blomqvist A.G."/>
            <person name="Sanna P.P."/>
            <person name="Milner R.J."/>
            <person name="Wilson M.C."/>
        </authorList>
    </citation>
    <scope>NUCLEOTIDE SEQUENCE [MRNA] (ISOFORM 1)</scope>
    <source>
        <strain>White leghorn</strain>
        <tissue>Retina</tissue>
    </source>
</reference>
<reference key="2">
    <citation type="journal article" date="1993" name="J. Mol. Biol.">
        <title>Structure of the chicken gene for SNAP-25 reveals duplicated exon encoding distinct isoforms of the protein.</title>
        <authorList>
            <person name="Bark I.C."/>
        </authorList>
    </citation>
    <scope>NUCLEOTIDE SEQUENCE [GENOMIC DNA]</scope>
    <scope>ALTERNATIVE SPLICING (ISOFORMS 1 AND 2)</scope>
</reference>
<feature type="chain" id="PRO_0000213593" description="Synaptosomal-associated protein 25">
    <location>
        <begin position="1"/>
        <end position="206"/>
    </location>
</feature>
<feature type="domain" description="t-SNARE coiled-coil homology 1" evidence="3">
    <location>
        <begin position="19"/>
        <end position="81"/>
    </location>
</feature>
<feature type="domain" description="t-SNARE coiled-coil homology 2" evidence="3">
    <location>
        <begin position="140"/>
        <end position="202"/>
    </location>
</feature>
<feature type="region of interest" description="Disordered" evidence="4">
    <location>
        <begin position="1"/>
        <end position="23"/>
    </location>
</feature>
<feature type="compositionally biased region" description="Basic and acidic residues" evidence="4">
    <location>
        <begin position="1"/>
        <end position="20"/>
    </location>
</feature>
<feature type="modified residue" description="Phosphothreonine" evidence="1">
    <location>
        <position position="138"/>
    </location>
</feature>
<feature type="modified residue" description="Phosphoserine" evidence="1">
    <location>
        <position position="187"/>
    </location>
</feature>
<feature type="lipid moiety-binding region" description="S-palmitoyl cysteine" evidence="1">
    <location>
        <position position="85"/>
    </location>
</feature>
<feature type="lipid moiety-binding region" description="S-palmitoyl cysteine" evidence="1">
    <location>
        <position position="88"/>
    </location>
</feature>
<feature type="lipid moiety-binding region" description="S-palmitoyl cysteine" evidence="1">
    <location>
        <position position="90"/>
    </location>
</feature>
<feature type="lipid moiety-binding region" description="S-palmitoyl cysteine" evidence="1">
    <location>
        <position position="92"/>
    </location>
</feature>
<feature type="splice variant" id="VSP_010018" description="In isoform 2." evidence="5">
    <original>ERIEEGMDQINKDMKEAEKNLTDLGKFCGLCV</original>
    <variation>DRVEEGMNHINQDMKEAEKNLKDLGKCCGLFI</variation>
    <location>
        <begin position="58"/>
        <end position="89"/>
    </location>
</feature>
<dbReference type="EMBL" id="M57957">
    <property type="protein sequence ID" value="AAA49072.1"/>
    <property type="molecule type" value="mRNA"/>
</dbReference>
<dbReference type="EMBL" id="L09253">
    <property type="protein sequence ID" value="AAA49070.1"/>
    <property type="molecule type" value="Genomic_DNA"/>
</dbReference>
<dbReference type="EMBL" id="L09254">
    <property type="protein sequence ID" value="AAA49070.1"/>
    <property type="status" value="JOINED"/>
    <property type="molecule type" value="Genomic_DNA"/>
</dbReference>
<dbReference type="EMBL" id="L09257">
    <property type="protein sequence ID" value="AAA49070.1"/>
    <property type="status" value="JOINED"/>
    <property type="molecule type" value="Genomic_DNA"/>
</dbReference>
<dbReference type="EMBL" id="L09259">
    <property type="protein sequence ID" value="AAA49070.1"/>
    <property type="status" value="JOINED"/>
    <property type="molecule type" value="Genomic_DNA"/>
</dbReference>
<dbReference type="EMBL" id="L09251">
    <property type="protein sequence ID" value="AAA49070.1"/>
    <property type="status" value="JOINED"/>
    <property type="molecule type" value="Genomic_DNA"/>
</dbReference>
<dbReference type="EMBL" id="L09258">
    <property type="protein sequence ID" value="AAA49070.1"/>
    <property type="status" value="JOINED"/>
    <property type="molecule type" value="Genomic_DNA"/>
</dbReference>
<dbReference type="EMBL" id="L09250">
    <property type="protein sequence ID" value="AAA49070.1"/>
    <property type="status" value="JOINED"/>
    <property type="molecule type" value="Genomic_DNA"/>
</dbReference>
<dbReference type="EMBL" id="L09253">
    <property type="protein sequence ID" value="AAA49071.1"/>
    <property type="molecule type" value="Genomic_DNA"/>
</dbReference>
<dbReference type="EMBL" id="L09254">
    <property type="protein sequence ID" value="AAA49071.1"/>
    <property type="status" value="JOINED"/>
    <property type="molecule type" value="Genomic_DNA"/>
</dbReference>
<dbReference type="EMBL" id="L09257">
    <property type="protein sequence ID" value="AAA49071.1"/>
    <property type="status" value="JOINED"/>
    <property type="molecule type" value="Genomic_DNA"/>
</dbReference>
<dbReference type="EMBL" id="L09259">
    <property type="protein sequence ID" value="AAA49071.1"/>
    <property type="status" value="JOINED"/>
    <property type="molecule type" value="Genomic_DNA"/>
</dbReference>
<dbReference type="EMBL" id="L09252">
    <property type="protein sequence ID" value="AAA49071.1"/>
    <property type="status" value="JOINED"/>
    <property type="molecule type" value="Genomic_DNA"/>
</dbReference>
<dbReference type="EMBL" id="L09258">
    <property type="protein sequence ID" value="AAA49071.1"/>
    <property type="status" value="JOINED"/>
    <property type="molecule type" value="Genomic_DNA"/>
</dbReference>
<dbReference type="EMBL" id="L09250">
    <property type="protein sequence ID" value="AAA49071.1"/>
    <property type="status" value="JOINED"/>
    <property type="molecule type" value="Genomic_DNA"/>
</dbReference>
<dbReference type="PIR" id="A37861">
    <property type="entry name" value="A37861"/>
</dbReference>
<dbReference type="RefSeq" id="NP_001385139.1">
    <molecule id="P60878-1"/>
    <property type="nucleotide sequence ID" value="NM_001398210.1"/>
</dbReference>
<dbReference type="RefSeq" id="NP_990789.1">
    <property type="nucleotide sequence ID" value="NM_205458.1"/>
</dbReference>
<dbReference type="RefSeq" id="XP_015138942.1">
    <property type="nucleotide sequence ID" value="XM_015283456.1"/>
</dbReference>
<dbReference type="RefSeq" id="XP_015138943.1">
    <property type="nucleotide sequence ID" value="XM_015283457.1"/>
</dbReference>
<dbReference type="BMRB" id="P60878"/>
<dbReference type="SMR" id="P60878"/>
<dbReference type="BioGRID" id="676693">
    <property type="interactions" value="1"/>
</dbReference>
<dbReference type="FunCoup" id="P60878">
    <property type="interactions" value="198"/>
</dbReference>
<dbReference type="IntAct" id="P60878">
    <property type="interactions" value="1"/>
</dbReference>
<dbReference type="STRING" id="9031.ENSGALP00000014636"/>
<dbReference type="iPTMnet" id="P60878"/>
<dbReference type="PaxDb" id="9031-ENSGALP00000014636"/>
<dbReference type="Ensembl" id="ENSGALT00010044232.1">
    <molecule id="P60878-1"/>
    <property type="protein sequence ID" value="ENSGALP00010026310.1"/>
    <property type="gene ID" value="ENSGALG00010018327.1"/>
</dbReference>
<dbReference type="Ensembl" id="ENSGALT00010044242.1">
    <molecule id="P60878-2"/>
    <property type="protein sequence ID" value="ENSGALP00010026317.1"/>
    <property type="gene ID" value="ENSGALG00010018327.1"/>
</dbReference>
<dbReference type="GeneID" id="396444"/>
<dbReference type="KEGG" id="gga:396444"/>
<dbReference type="VEuPathDB" id="HostDB:geneid_396444"/>
<dbReference type="eggNOG" id="KOG3065">
    <property type="taxonomic scope" value="Eukaryota"/>
</dbReference>
<dbReference type="GeneTree" id="ENSGT00950000182843"/>
<dbReference type="HOGENOM" id="CLU_096939_0_0_1"/>
<dbReference type="InParanoid" id="P60878"/>
<dbReference type="OMA" id="GMIQINE"/>
<dbReference type="OrthoDB" id="19261at2759"/>
<dbReference type="PhylomeDB" id="P60878"/>
<dbReference type="Reactome" id="R-GGA-181430">
    <property type="pathway name" value="Norepinephrine Neurotransmitter Release Cycle"/>
</dbReference>
<dbReference type="Reactome" id="R-GGA-264642">
    <property type="pathway name" value="Acetylcholine Neurotransmitter Release Cycle"/>
</dbReference>
<dbReference type="Reactome" id="R-GGA-449836">
    <property type="pathway name" value="Other interleukin signaling"/>
</dbReference>
<dbReference type="Reactome" id="R-GGA-6798695">
    <property type="pathway name" value="Neutrophil degranulation"/>
</dbReference>
<dbReference type="PRO" id="PR:P60878"/>
<dbReference type="Proteomes" id="UP000000539">
    <property type="component" value="Chromosome 3"/>
</dbReference>
<dbReference type="Bgee" id="ENSGALG00000009003">
    <property type="expression patterns" value="Expressed in cerebellum and 3 other cell types or tissues"/>
</dbReference>
<dbReference type="GO" id="GO:0030424">
    <property type="term" value="C:axon"/>
    <property type="evidence" value="ECO:0007669"/>
    <property type="project" value="Ensembl"/>
</dbReference>
<dbReference type="GO" id="GO:0031083">
    <property type="term" value="C:BLOC-1 complex"/>
    <property type="evidence" value="ECO:0007669"/>
    <property type="project" value="Ensembl"/>
</dbReference>
<dbReference type="GO" id="GO:0005938">
    <property type="term" value="C:cell cortex"/>
    <property type="evidence" value="ECO:0007669"/>
    <property type="project" value="Ensembl"/>
</dbReference>
<dbReference type="GO" id="GO:0005737">
    <property type="term" value="C:cytoplasm"/>
    <property type="evidence" value="ECO:0000250"/>
    <property type="project" value="UniProtKB"/>
</dbReference>
<dbReference type="GO" id="GO:0005856">
    <property type="term" value="C:cytoskeleton"/>
    <property type="evidence" value="ECO:0007669"/>
    <property type="project" value="Ensembl"/>
</dbReference>
<dbReference type="GO" id="GO:0098978">
    <property type="term" value="C:glutamatergic synapse"/>
    <property type="evidence" value="ECO:0007669"/>
    <property type="project" value="Ensembl"/>
</dbReference>
<dbReference type="GO" id="GO:0016020">
    <property type="term" value="C:membrane"/>
    <property type="evidence" value="ECO:0000250"/>
    <property type="project" value="UniProtKB"/>
</dbReference>
<dbReference type="GO" id="GO:0048471">
    <property type="term" value="C:perinuclear region of cytoplasm"/>
    <property type="evidence" value="ECO:0007669"/>
    <property type="project" value="Ensembl"/>
</dbReference>
<dbReference type="GO" id="GO:0005886">
    <property type="term" value="C:plasma membrane"/>
    <property type="evidence" value="ECO:0000318"/>
    <property type="project" value="GO_Central"/>
</dbReference>
<dbReference type="GO" id="GO:0042734">
    <property type="term" value="C:presynaptic membrane"/>
    <property type="evidence" value="ECO:0007669"/>
    <property type="project" value="Ensembl"/>
</dbReference>
<dbReference type="GO" id="GO:0097470">
    <property type="term" value="C:ribbon synapse"/>
    <property type="evidence" value="ECO:0007669"/>
    <property type="project" value="Ensembl"/>
</dbReference>
<dbReference type="GO" id="GO:0031201">
    <property type="term" value="C:SNARE complex"/>
    <property type="evidence" value="ECO:0000250"/>
    <property type="project" value="UniProtKB"/>
</dbReference>
<dbReference type="GO" id="GO:0036477">
    <property type="term" value="C:somatodendritic compartment"/>
    <property type="evidence" value="ECO:0007669"/>
    <property type="project" value="Ensembl"/>
</dbReference>
<dbReference type="GO" id="GO:0008021">
    <property type="term" value="C:synaptic vesicle"/>
    <property type="evidence" value="ECO:0007669"/>
    <property type="project" value="Ensembl"/>
</dbReference>
<dbReference type="GO" id="GO:0070032">
    <property type="term" value="C:synaptobrevin 2-SNAP-25-syntaxin-1a-complexin I complex"/>
    <property type="evidence" value="ECO:0000318"/>
    <property type="project" value="GO_Central"/>
</dbReference>
<dbReference type="GO" id="GO:0005802">
    <property type="term" value="C:trans-Golgi network"/>
    <property type="evidence" value="ECO:0007669"/>
    <property type="project" value="Ensembl"/>
</dbReference>
<dbReference type="GO" id="GO:0005484">
    <property type="term" value="F:SNAP receptor activity"/>
    <property type="evidence" value="ECO:0000318"/>
    <property type="project" value="GO_Central"/>
</dbReference>
<dbReference type="GO" id="GO:0017075">
    <property type="term" value="F:syntaxin-1 binding"/>
    <property type="evidence" value="ECO:0000318"/>
    <property type="project" value="GO_Central"/>
</dbReference>
<dbReference type="GO" id="GO:0005249">
    <property type="term" value="F:voltage-gated potassium channel activity"/>
    <property type="evidence" value="ECO:0007669"/>
    <property type="project" value="InterPro"/>
</dbReference>
<dbReference type="GO" id="GO:0008306">
    <property type="term" value="P:associative learning"/>
    <property type="evidence" value="ECO:0007669"/>
    <property type="project" value="Ensembl"/>
</dbReference>
<dbReference type="GO" id="GO:0006887">
    <property type="term" value="P:exocytosis"/>
    <property type="evidence" value="ECO:0000318"/>
    <property type="project" value="GO_Central"/>
</dbReference>
<dbReference type="GO" id="GO:0007626">
    <property type="term" value="P:locomotory behavior"/>
    <property type="evidence" value="ECO:0007669"/>
    <property type="project" value="Ensembl"/>
</dbReference>
<dbReference type="GO" id="GO:0060291">
    <property type="term" value="P:long-term synaptic potentiation"/>
    <property type="evidence" value="ECO:0007669"/>
    <property type="project" value="Ensembl"/>
</dbReference>
<dbReference type="GO" id="GO:0099525">
    <property type="term" value="P:presynaptic dense core vesicle exocytosis"/>
    <property type="evidence" value="ECO:0007669"/>
    <property type="project" value="Ensembl"/>
</dbReference>
<dbReference type="GO" id="GO:0070201">
    <property type="term" value="P:regulation of establishment of protein localization"/>
    <property type="evidence" value="ECO:0007669"/>
    <property type="project" value="Ensembl"/>
</dbReference>
<dbReference type="GO" id="GO:0010975">
    <property type="term" value="P:regulation of neuron projection development"/>
    <property type="evidence" value="ECO:0007669"/>
    <property type="project" value="Ensembl"/>
</dbReference>
<dbReference type="GO" id="GO:0031629">
    <property type="term" value="P:synaptic vesicle fusion to presynaptic active zone membrane"/>
    <property type="evidence" value="ECO:0000318"/>
    <property type="project" value="GO_Central"/>
</dbReference>
<dbReference type="GO" id="GO:0016082">
    <property type="term" value="P:synaptic vesicle priming"/>
    <property type="evidence" value="ECO:0000318"/>
    <property type="project" value="GO_Central"/>
</dbReference>
<dbReference type="CDD" id="cd15885">
    <property type="entry name" value="SNARE_SNAP25C"/>
    <property type="match status" value="1"/>
</dbReference>
<dbReference type="CDD" id="cd15894">
    <property type="entry name" value="SNARE_SNAP25N"/>
    <property type="match status" value="1"/>
</dbReference>
<dbReference type="FunFam" id="1.20.5.110:FF:000007">
    <property type="entry name" value="Synaptosomal-associated protein"/>
    <property type="match status" value="1"/>
</dbReference>
<dbReference type="FunFam" id="1.20.5.110:FF:000009">
    <property type="entry name" value="Synaptosomal-associated protein"/>
    <property type="match status" value="1"/>
</dbReference>
<dbReference type="Gene3D" id="1.20.5.110">
    <property type="match status" value="2"/>
</dbReference>
<dbReference type="InterPro" id="IPR000928">
    <property type="entry name" value="SNAP-25_dom"/>
</dbReference>
<dbReference type="InterPro" id="IPR039077">
    <property type="entry name" value="SNAP-25_N_SNARE_chord"/>
</dbReference>
<dbReference type="InterPro" id="IPR000727">
    <property type="entry name" value="T_SNARE_dom"/>
</dbReference>
<dbReference type="PANTHER" id="PTHR19305">
    <property type="entry name" value="SYNAPTOSOMAL ASSOCIATED PROTEIN"/>
    <property type="match status" value="1"/>
</dbReference>
<dbReference type="PANTHER" id="PTHR19305:SF5">
    <property type="entry name" value="SYNAPTOSOMAL-ASSOCIATED PROTEIN 25"/>
    <property type="match status" value="1"/>
</dbReference>
<dbReference type="Pfam" id="PF00835">
    <property type="entry name" value="SNAP-25"/>
    <property type="match status" value="1"/>
</dbReference>
<dbReference type="SMART" id="SM00397">
    <property type="entry name" value="t_SNARE"/>
    <property type="match status" value="2"/>
</dbReference>
<dbReference type="SUPFAM" id="SSF58038">
    <property type="entry name" value="SNARE fusion complex"/>
    <property type="match status" value="2"/>
</dbReference>
<dbReference type="PROSITE" id="PS50192">
    <property type="entry name" value="T_SNARE"/>
    <property type="match status" value="2"/>
</dbReference>
<comment type="function">
    <text evidence="1">t-SNARE involved in the molecular regulation of neurotransmitter release. May play an important role in the synaptic function of specific neuronal systems. Associates with proteins involved in vesicle docking and membrane fusion (By similarity).</text>
</comment>
<comment type="subunit">
    <text evidence="1">Part of the SNARE core complex containing SNAP25, VAMP2 and STX1A. This complex binds CPLX1. Interacts with TRIM9, RIMS1 and SNAPIN. Binds STXBP6. Found in a ternary complex with STX1A and VAMP8. Associates with the BLOC-1 complex. Isoform 1 and isoform 2 interact with BLOC1S6 (By similarity). Interacts with alpha-synuclein/SNCA (By similarity).</text>
</comment>
<comment type="interaction">
    <interactant intactId="EBI-1637031">
        <id>P60878</id>
    </interactant>
    <interactant intactId="EBI-1635766">
        <id>Q8AYS8</id>
        <label>KCNMA1</label>
    </interactant>
    <organismsDiffer>false</organismsDiffer>
    <experiments>3</experiments>
</comment>
<comment type="subcellular location">
    <subcellularLocation>
        <location evidence="1">Membrane</location>
        <topology evidence="1">Lipid-anchor</topology>
    </subcellularLocation>
    <subcellularLocation>
        <location evidence="1">Synapse</location>
        <location evidence="1">Synaptosome</location>
    </subcellularLocation>
    <subcellularLocation>
        <location evidence="2">Cell membrane</location>
    </subcellularLocation>
    <text evidence="1">Membrane association requires palmitoylation.</text>
</comment>
<comment type="alternative products">
    <event type="alternative splicing"/>
    <isoform>
        <id>P60878-1</id>
        <id>P13795-1</id>
        <name>1</name>
        <name>SNAP-25b</name>
        <sequence type="displayed"/>
    </isoform>
    <isoform>
        <id>P60878-2</id>
        <id>P13795-2</id>
        <name>2</name>
        <name>SNAP-25a</name>
        <sequence type="described" ref="VSP_010018"/>
    </isoform>
    <text>Isoforms differ by the usage of two alternative homologous exons (5a and 5b) which code for positions 56 to 94 and differ only in 9 positions out of 39.</text>
</comment>
<comment type="PTM">
    <text evidence="1">Palmitoylated. Cys-85 appears to be the main site, and palmitoylation is required for membrane association (By similarity).</text>
</comment>
<comment type="similarity">
    <text evidence="5">Belongs to the SNAP-25 family.</text>
</comment>
<proteinExistence type="evidence at protein level"/>